<gene>
    <name type="primary">AR</name>
    <name type="synonym">NR3C4</name>
</gene>
<reference key="1">
    <citation type="journal article" date="1998" name="J. Mol. Evol.">
        <title>Evolution of the primate androgen receptor: a structural basis for disease.</title>
        <authorList>
            <person name="Choong C.S."/>
            <person name="Kemppainen J.A."/>
            <person name="Wilson E.M."/>
        </authorList>
    </citation>
    <scope>NUCLEOTIDE SEQUENCE [MRNA]</scope>
</reference>
<reference key="2">
    <citation type="journal article" date="2004" name="PLoS Biol.">
        <title>Recognition and accommodation at the androgen receptor coactivator binding interface.</title>
        <authorList>
            <person name="Hur E."/>
            <person name="Pfaff S.J."/>
            <person name="Payne E.S."/>
            <person name="Groen H."/>
            <person name="Buehrer B.M."/>
            <person name="Fletterick R.J."/>
        </authorList>
    </citation>
    <scope>X-RAY CRYSTALLOGRAPHY (1.4 ANGSTROMS) OF 654-911 IN COMPLEXES WITH DIHYDROTESTOSTERONE AND COACTIVATOR-BASED PEPTIDES</scope>
</reference>
<evidence type="ECO:0000250" key="1"/>
<evidence type="ECO:0000250" key="2">
    <source>
        <dbReference type="UniProtKB" id="P10275"/>
    </source>
</evidence>
<evidence type="ECO:0000250" key="3">
    <source>
        <dbReference type="UniProtKB" id="P15207"/>
    </source>
</evidence>
<evidence type="ECO:0000250" key="4">
    <source>
        <dbReference type="UniProtKB" id="P19091"/>
    </source>
</evidence>
<evidence type="ECO:0000255" key="5">
    <source>
        <dbReference type="PROSITE-ProRule" id="PRU00407"/>
    </source>
</evidence>
<evidence type="ECO:0000255" key="6">
    <source>
        <dbReference type="PROSITE-ProRule" id="PRU01189"/>
    </source>
</evidence>
<evidence type="ECO:0000256" key="7">
    <source>
        <dbReference type="SAM" id="MobiDB-lite"/>
    </source>
</evidence>
<evidence type="ECO:0000269" key="8">
    <source>
    </source>
</evidence>
<evidence type="ECO:0000305" key="9"/>
<evidence type="ECO:0007744" key="10">
    <source>
        <dbReference type="PDB" id="1T73"/>
    </source>
</evidence>
<evidence type="ECO:0007744" key="11">
    <source>
        <dbReference type="PDB" id="1T74"/>
    </source>
</evidence>
<evidence type="ECO:0007744" key="12">
    <source>
        <dbReference type="PDB" id="1T76"/>
    </source>
</evidence>
<evidence type="ECO:0007744" key="13">
    <source>
        <dbReference type="PDB" id="1T79"/>
    </source>
</evidence>
<evidence type="ECO:0007744" key="14">
    <source>
        <dbReference type="PDB" id="1T7F"/>
    </source>
</evidence>
<evidence type="ECO:0007744" key="15">
    <source>
        <dbReference type="PDB" id="1T7M"/>
    </source>
</evidence>
<evidence type="ECO:0007744" key="16">
    <source>
        <dbReference type="PDB" id="1T7R"/>
    </source>
</evidence>
<evidence type="ECO:0007744" key="17">
    <source>
        <dbReference type="PDB" id="1T7T"/>
    </source>
</evidence>
<evidence type="ECO:0007829" key="18">
    <source>
        <dbReference type="PDB" id="1T7R"/>
    </source>
</evidence>
<proteinExistence type="evidence at protein level"/>
<keyword id="KW-0002">3D-structure</keyword>
<keyword id="KW-0963">Cytoplasm</keyword>
<keyword id="KW-0238">DNA-binding</keyword>
<keyword id="KW-1017">Isopeptide bond</keyword>
<keyword id="KW-0446">Lipid-binding</keyword>
<keyword id="KW-0449">Lipoprotein</keyword>
<keyword id="KW-0479">Metal-binding</keyword>
<keyword id="KW-0539">Nucleus</keyword>
<keyword id="KW-0564">Palmitate</keyword>
<keyword id="KW-0597">Phosphoprotein</keyword>
<keyword id="KW-0675">Receptor</keyword>
<keyword id="KW-1185">Reference proteome</keyword>
<keyword id="KW-0754">Steroid-binding</keyword>
<keyword id="KW-0804">Transcription</keyword>
<keyword id="KW-0805">Transcription regulation</keyword>
<keyword id="KW-0832">Ubl conjugation</keyword>
<keyword id="KW-0862">Zinc</keyword>
<keyword id="KW-0863">Zinc-finger</keyword>
<protein>
    <recommendedName>
        <fullName>Androgen receptor</fullName>
    </recommendedName>
    <alternativeName>
        <fullName>Dihydrotestosterone receptor</fullName>
    </alternativeName>
    <alternativeName>
        <fullName>Nuclear receptor subfamily 3 group C member 4</fullName>
    </alternativeName>
</protein>
<dbReference type="EMBL" id="U94177">
    <property type="protein sequence ID" value="AAC73048.1"/>
    <property type="molecule type" value="mRNA"/>
</dbReference>
<dbReference type="RefSeq" id="NP_001009012.1">
    <property type="nucleotide sequence ID" value="NM_001009012.1"/>
</dbReference>
<dbReference type="PDB" id="1T73">
    <property type="method" value="X-ray"/>
    <property type="resolution" value="2.20 A"/>
    <property type="chains" value="A=654-911"/>
</dbReference>
<dbReference type="PDB" id="1T74">
    <property type="method" value="X-ray"/>
    <property type="resolution" value="2.00 A"/>
    <property type="chains" value="A=654-911"/>
</dbReference>
<dbReference type="PDB" id="1T76">
    <property type="method" value="X-ray"/>
    <property type="resolution" value="2.10 A"/>
    <property type="chains" value="A=654-911"/>
</dbReference>
<dbReference type="PDB" id="1T79">
    <property type="method" value="X-ray"/>
    <property type="resolution" value="1.80 A"/>
    <property type="chains" value="A=654-911"/>
</dbReference>
<dbReference type="PDB" id="1T7F">
    <property type="method" value="X-ray"/>
    <property type="resolution" value="1.60 A"/>
    <property type="chains" value="A=654-911"/>
</dbReference>
<dbReference type="PDB" id="1T7M">
    <property type="method" value="X-ray"/>
    <property type="resolution" value="1.60 A"/>
    <property type="chains" value="A=654-911"/>
</dbReference>
<dbReference type="PDB" id="1T7R">
    <property type="method" value="X-ray"/>
    <property type="resolution" value="1.40 A"/>
    <property type="chains" value="A=654-911"/>
</dbReference>
<dbReference type="PDB" id="1T7T">
    <property type="method" value="X-ray"/>
    <property type="resolution" value="1.70 A"/>
    <property type="chains" value="A=654-911"/>
</dbReference>
<dbReference type="PDBsum" id="1T73"/>
<dbReference type="PDBsum" id="1T74"/>
<dbReference type="PDBsum" id="1T76"/>
<dbReference type="PDBsum" id="1T79"/>
<dbReference type="PDBsum" id="1T7F"/>
<dbReference type="PDBsum" id="1T7M"/>
<dbReference type="PDBsum" id="1T7R"/>
<dbReference type="PDBsum" id="1T7T"/>
<dbReference type="SMR" id="O97775"/>
<dbReference type="DIP" id="DIP-46077N"/>
<dbReference type="FunCoup" id="O97775">
    <property type="interactions" value="1117"/>
</dbReference>
<dbReference type="STRING" id="9598.ENSPTRP00000076864"/>
<dbReference type="GeneID" id="747460"/>
<dbReference type="KEGG" id="ptr:747460"/>
<dbReference type="CTD" id="367"/>
<dbReference type="eggNOG" id="KOG3575">
    <property type="taxonomic scope" value="Eukaryota"/>
</dbReference>
<dbReference type="InParanoid" id="O97775"/>
<dbReference type="OrthoDB" id="13200at9604"/>
<dbReference type="EvolutionaryTrace" id="O97775"/>
<dbReference type="Proteomes" id="UP000002277">
    <property type="component" value="Unplaced"/>
</dbReference>
<dbReference type="GO" id="GO:0000785">
    <property type="term" value="C:chromatin"/>
    <property type="evidence" value="ECO:0000250"/>
    <property type="project" value="UniProtKB"/>
</dbReference>
<dbReference type="GO" id="GO:0005737">
    <property type="term" value="C:cytoplasm"/>
    <property type="evidence" value="ECO:0000250"/>
    <property type="project" value="UniProtKB"/>
</dbReference>
<dbReference type="GO" id="GO:0005654">
    <property type="term" value="C:nucleoplasm"/>
    <property type="evidence" value="ECO:0007669"/>
    <property type="project" value="UniProtKB-ARBA"/>
</dbReference>
<dbReference type="GO" id="GO:0005634">
    <property type="term" value="C:nucleus"/>
    <property type="evidence" value="ECO:0000250"/>
    <property type="project" value="UniProtKB"/>
</dbReference>
<dbReference type="GO" id="GO:0005497">
    <property type="term" value="F:androgen binding"/>
    <property type="evidence" value="ECO:0000250"/>
    <property type="project" value="UniProtKB"/>
</dbReference>
<dbReference type="GO" id="GO:0008013">
    <property type="term" value="F:beta-catenin binding"/>
    <property type="evidence" value="ECO:0000250"/>
    <property type="project" value="UniProtKB"/>
</dbReference>
<dbReference type="GO" id="GO:0003700">
    <property type="term" value="F:DNA-binding transcription factor activity"/>
    <property type="evidence" value="ECO:0000250"/>
    <property type="project" value="UniProtKB"/>
</dbReference>
<dbReference type="GO" id="GO:0034056">
    <property type="term" value="F:estrogen response element binding"/>
    <property type="evidence" value="ECO:0000318"/>
    <property type="project" value="GO_Central"/>
</dbReference>
<dbReference type="GO" id="GO:0004879">
    <property type="term" value="F:nuclear receptor activity"/>
    <property type="evidence" value="ECO:0000250"/>
    <property type="project" value="UniProtKB"/>
</dbReference>
<dbReference type="GO" id="GO:0005496">
    <property type="term" value="F:steroid binding"/>
    <property type="evidence" value="ECO:0007669"/>
    <property type="project" value="UniProtKB-KW"/>
</dbReference>
<dbReference type="GO" id="GO:0000976">
    <property type="term" value="F:transcription cis-regulatory region binding"/>
    <property type="evidence" value="ECO:0000250"/>
    <property type="project" value="UniProtKB"/>
</dbReference>
<dbReference type="GO" id="GO:0008270">
    <property type="term" value="F:zinc ion binding"/>
    <property type="evidence" value="ECO:0007669"/>
    <property type="project" value="UniProtKB-KW"/>
</dbReference>
<dbReference type="GO" id="GO:0030521">
    <property type="term" value="P:androgen receptor signaling pathway"/>
    <property type="evidence" value="ECO:0000250"/>
    <property type="project" value="UniProtKB"/>
</dbReference>
<dbReference type="GO" id="GO:0030522">
    <property type="term" value="P:intracellular receptor signaling pathway"/>
    <property type="evidence" value="ECO:0000250"/>
    <property type="project" value="UniProtKB"/>
</dbReference>
<dbReference type="GO" id="GO:0008584">
    <property type="term" value="P:male gonad development"/>
    <property type="evidence" value="ECO:0000318"/>
    <property type="project" value="GO_Central"/>
</dbReference>
<dbReference type="GO" id="GO:2001237">
    <property type="term" value="P:negative regulation of extrinsic apoptotic signaling pathway"/>
    <property type="evidence" value="ECO:0000250"/>
    <property type="project" value="UniProtKB"/>
</dbReference>
<dbReference type="GO" id="GO:0030518">
    <property type="term" value="P:nuclear receptor-mediated steroid hormone signaling pathway"/>
    <property type="evidence" value="ECO:0000318"/>
    <property type="project" value="GO_Central"/>
</dbReference>
<dbReference type="GO" id="GO:0008284">
    <property type="term" value="P:positive regulation of cell population proliferation"/>
    <property type="evidence" value="ECO:0000250"/>
    <property type="project" value="UniProtKB"/>
</dbReference>
<dbReference type="GO" id="GO:0010628">
    <property type="term" value="P:positive regulation of gene expression"/>
    <property type="evidence" value="ECO:0000250"/>
    <property type="project" value="UniProtKB"/>
</dbReference>
<dbReference type="GO" id="GO:0045944">
    <property type="term" value="P:positive regulation of transcription by RNA polymerase II"/>
    <property type="evidence" value="ECO:0000250"/>
    <property type="project" value="UniProtKB"/>
</dbReference>
<dbReference type="GO" id="GO:1903076">
    <property type="term" value="P:regulation of protein localization to plasma membrane"/>
    <property type="evidence" value="ECO:0000250"/>
    <property type="project" value="UniProtKB"/>
</dbReference>
<dbReference type="CDD" id="cd07173">
    <property type="entry name" value="NR_DBD_AR"/>
    <property type="match status" value="1"/>
</dbReference>
<dbReference type="CDD" id="cd07073">
    <property type="entry name" value="NR_LBD_AR"/>
    <property type="match status" value="1"/>
</dbReference>
<dbReference type="FunFam" id="3.30.50.10:FF:000024">
    <property type="entry name" value="Androgen receptor"/>
    <property type="match status" value="1"/>
</dbReference>
<dbReference type="FunFam" id="1.10.565.10:FF:000004">
    <property type="entry name" value="Androgen receptor variant"/>
    <property type="match status" value="1"/>
</dbReference>
<dbReference type="Gene3D" id="3.30.50.10">
    <property type="entry name" value="Erythroid Transcription Factor GATA-1, subunit A"/>
    <property type="match status" value="1"/>
</dbReference>
<dbReference type="Gene3D" id="1.10.565.10">
    <property type="entry name" value="Retinoid X Receptor"/>
    <property type="match status" value="1"/>
</dbReference>
<dbReference type="InterPro" id="IPR001103">
    <property type="entry name" value="Andrgn_rcpt"/>
</dbReference>
<dbReference type="InterPro" id="IPR035500">
    <property type="entry name" value="NHR-like_dom_sf"/>
</dbReference>
<dbReference type="InterPro" id="IPR000536">
    <property type="entry name" value="Nucl_hrmn_rcpt_lig-bd"/>
</dbReference>
<dbReference type="InterPro" id="IPR050200">
    <property type="entry name" value="Nuclear_hormone_rcpt_NR3"/>
</dbReference>
<dbReference type="InterPro" id="IPR001628">
    <property type="entry name" value="Znf_hrmn_rcpt"/>
</dbReference>
<dbReference type="InterPro" id="IPR013088">
    <property type="entry name" value="Znf_NHR/GATA"/>
</dbReference>
<dbReference type="PANTHER" id="PTHR48092">
    <property type="entry name" value="KNIRPS-RELATED PROTEIN-RELATED"/>
    <property type="match status" value="1"/>
</dbReference>
<dbReference type="Pfam" id="PF02166">
    <property type="entry name" value="Androgen_recep"/>
    <property type="match status" value="1"/>
</dbReference>
<dbReference type="Pfam" id="PF00104">
    <property type="entry name" value="Hormone_recep"/>
    <property type="match status" value="1"/>
</dbReference>
<dbReference type="Pfam" id="PF00105">
    <property type="entry name" value="zf-C4"/>
    <property type="match status" value="1"/>
</dbReference>
<dbReference type="PRINTS" id="PR00521">
    <property type="entry name" value="ANDROGENR"/>
</dbReference>
<dbReference type="PRINTS" id="PR00047">
    <property type="entry name" value="STROIDFINGER"/>
</dbReference>
<dbReference type="SMART" id="SM00430">
    <property type="entry name" value="HOLI"/>
    <property type="match status" value="1"/>
</dbReference>
<dbReference type="SMART" id="SM00399">
    <property type="entry name" value="ZnF_C4"/>
    <property type="match status" value="1"/>
</dbReference>
<dbReference type="SUPFAM" id="SSF57716">
    <property type="entry name" value="Glucocorticoid receptor-like (DNA-binding domain)"/>
    <property type="match status" value="1"/>
</dbReference>
<dbReference type="SUPFAM" id="SSF48508">
    <property type="entry name" value="Nuclear receptor ligand-binding domain"/>
    <property type="match status" value="1"/>
</dbReference>
<dbReference type="PROSITE" id="PS51843">
    <property type="entry name" value="NR_LBD"/>
    <property type="match status" value="1"/>
</dbReference>
<dbReference type="PROSITE" id="PS00031">
    <property type="entry name" value="NUCLEAR_REC_DBD_1"/>
    <property type="match status" value="1"/>
</dbReference>
<dbReference type="PROSITE" id="PS51030">
    <property type="entry name" value="NUCLEAR_REC_DBD_2"/>
    <property type="match status" value="1"/>
</dbReference>
<organism>
    <name type="scientific">Pan troglodytes</name>
    <name type="common">Chimpanzee</name>
    <dbReference type="NCBI Taxonomy" id="9598"/>
    <lineage>
        <taxon>Eukaryota</taxon>
        <taxon>Metazoa</taxon>
        <taxon>Chordata</taxon>
        <taxon>Craniata</taxon>
        <taxon>Vertebrata</taxon>
        <taxon>Euteleostomi</taxon>
        <taxon>Mammalia</taxon>
        <taxon>Eutheria</taxon>
        <taxon>Euarchontoglires</taxon>
        <taxon>Primates</taxon>
        <taxon>Haplorrhini</taxon>
        <taxon>Catarrhini</taxon>
        <taxon>Hominidae</taxon>
        <taxon>Pan</taxon>
    </lineage>
</organism>
<accession>O97775</accession>
<comment type="function">
    <text evidence="2 3">Steroid hormone receptors are ligand-activated transcription factors that regulate eukaryotic gene expression and affect cellular proliferation and differentiation in target tissues. Transcription factor activity is modulated by bound coactivator and corepressor proteins like ZBTB7A that recruits NCOR1 and NCOR2 to the androgen response elements/ARE on target genes, negatively regulating androgen receptor signaling and androgen-induced cell proliferation. Transcription activation is also down-regulated by NR0B2. Activated, but not phosphorylated, by HIPK3 and ZIPK/DAPK3.</text>
</comment>
<comment type="subunit">
    <text evidence="2 3 4">Binds DNA as a homodimer. Part of a ternary complex containing AR, EFCAB6/DJBP and PARK7. Interacts with HIPK3 and NR0B2 in the presence of androgen. The ligand binding domain interacts with KAT7/HBO1 in the presence of dihydrotestosterone. Interacts with EFCAB6/DJBP, PQBP1, RANBP9, RBAK, SPDEF, SRA1, TGFB1I1 and RREB1. Interacts with ZMIZ1/ZIMP10 and ZMIZ2/ZMIP7 which both enhance its transactivation activity. Interacts with SLC30A9 and RAD54L2/ARIP4. Interacts with MACROD1 (via macro domain) (By similarity). Interacts via the ligand-binding domain with LXXLL and FXXLF motifs from NCOA1, NCOA2, NCOA3 and MAGEA11. Interacts (via nuclear receptor DNA binding domain and nuclear receptor ligand binding domain) with NCOA4 (By similarity). The AR N-terminal poly-Gln region binds Ran resulting in enhancement of AR-mediated transactivation. Ran-binding decreases as the poly-Gln length increases. Interacts with HIP1 (via coiled coil domain). Interacts (via ligand-binding domain) with TRIM68. Interacts with TNK2. Interacts with USP26. Interacts with RNF6. Interacts (regulated by RNF6 probably through polyubiquitination) with RNF14; regulates AR transcriptional activity. Interacts with PRMT2 and TRIM24. Interacts with RACK1. Interacts with RANBP10; this interaction enhances dihydrotestosterone-induced AR transcriptional activity. Interacts with PRPF6 in a hormone-independent way; this interaction enhances dihydrotestosterone-induced AR transcriptional activity. Interacts with STK4/MST1. Interacts with ZIPK/DAPK3. Interacts with LPXN. Interacts with MAK. Part of a complex containing AR, MAK and NCOA3. Interacts with CRY1. Interacts with CCAR1 and GATA2. Interacts with ZNF318. Interacts with BUD31. Interacts with ARID4A. Interacts with ARID4B. Interacts (via NR LBD domain) with ZBTB7A; the interaction is direct and androgen-dependent (By similarity). Interacts with NCOR1 (By similarity). Interacts with NCOR2 (By similarity). Interacts with CRY2 in a ligand-dependent manner (By similarity).</text>
</comment>
<comment type="subcellular location">
    <subcellularLocation>
        <location evidence="2">Nucleus</location>
    </subcellularLocation>
    <subcellularLocation>
        <location evidence="2">Cytoplasm</location>
    </subcellularLocation>
    <text evidence="2">Detected at the promoter of target genes. Predominantly cytoplasmic in unligated form but translocates to the nucleus upon ligand-binding. Can also translocate to the nucleus in unligated form in the presence of RACK1.</text>
</comment>
<comment type="domain">
    <text evidence="1">Composed of three domains: a modulating N-terminal domain, a DNA-binding domain and a C-terminal ligand-binding domain. In the presence of bound steroid the ligand-binding domain interacts with the N-terminal modulating domain, and thereby activates AR transcription factor activity. Agonist binding is required for dimerization and binding to target DNA. The transcription factor activity of the complex formed by ligand-activated AR and DNA is modulated by interactions with coactivator and corepressor proteins. Interaction with RANBP9 is mediated by both the N-terminal domain and the DNA-binding domain. Interaction with EFCAB6/DJBP is mediated by the DNA-binding domain (By similarity).</text>
</comment>
<comment type="PTM">
    <text evidence="2">Phosphorylated in prostate cancer cells in response to several growth factors including EGF. Phosphorylation is induced by c-Src kinase (CSK). Tyr-526 is one of the major phosphorylation sites and an increase in phosphorylation and Src kinase activity is associated with prostate cancer progression (By similarity). Phosphorylation by TNK2 enhances the DNA-binding and transcriptional activity. Phosphorylation at Ser-81 by CDK9 regulates AR promoter selectivity and cell growth (By similarity).</text>
</comment>
<comment type="PTM">
    <text evidence="2">Sumoylated on Lys-385 (major) and Lys-512 (By similarity). Ubiquitinated. Deubiquitinated by USP26 (By similarity). 'Lys-6' and 'Lys-27'-linked polyubiquitination by RNF6 modulates AR transcriptional activity and specificity (By similarity).</text>
</comment>
<comment type="PTM">
    <text evidence="2">Palmitoylated by ZDHHC7 and ZDHHC21. Palmitoylation is required for plasma membrane targeting and for rapid intracellular signaling via ERK and AKT kinases and cAMP generation (By similarity).</text>
</comment>
<comment type="miscellaneous">
    <text>In the absence of ligand, steroid hormone receptors are thought to be weakly associated with nuclear components; hormone binding greatly increases receptor affinity. The hormone-receptor complex appears to recognize discrete DNA sequences upstream of transcriptional start sites.</text>
</comment>
<comment type="miscellaneous">
    <text>Transcriptional activity is enhanced by binding to RANBP9.</text>
</comment>
<comment type="similarity">
    <text evidence="9">Belongs to the nuclear hormone receptor family. NR3 subfamily.</text>
</comment>
<feature type="chain" id="PRO_0000053708" description="Androgen receptor">
    <location>
        <begin position="1"/>
        <end position="911"/>
    </location>
</feature>
<feature type="domain" description="NR LBD" evidence="6">
    <location>
        <begin position="660"/>
        <end position="891"/>
    </location>
</feature>
<feature type="DNA-binding region" description="Nuclear receptor" evidence="5">
    <location>
        <begin position="551"/>
        <end position="623"/>
    </location>
</feature>
<feature type="zinc finger region" description="NR C4-type" evidence="5">
    <location>
        <begin position="551"/>
        <end position="571"/>
    </location>
</feature>
<feature type="zinc finger region" description="NR C4-type" evidence="5">
    <location>
        <begin position="587"/>
        <end position="611"/>
    </location>
</feature>
<feature type="region of interest" description="Interaction with ZNF318" evidence="4">
    <location>
        <begin position="1"/>
        <end position="578"/>
    </location>
</feature>
<feature type="region of interest" description="Modulating" evidence="1">
    <location>
        <begin position="1"/>
        <end position="549"/>
    </location>
</feature>
<feature type="region of interest" description="Disordered" evidence="7">
    <location>
        <begin position="35"/>
        <end position="164"/>
    </location>
</feature>
<feature type="region of interest" description="Disordered" evidence="7">
    <location>
        <begin position="192"/>
        <end position="225"/>
    </location>
</feature>
<feature type="region of interest" description="Interaction with LPXN" evidence="2">
    <location>
        <begin position="543"/>
        <end position="910"/>
    </location>
</feature>
<feature type="region of interest" description="Interaction with HIPK3" evidence="3">
    <location>
        <begin position="563"/>
        <end position="653"/>
    </location>
</feature>
<feature type="region of interest" description="Interaction with CCAR1" evidence="2">
    <location>
        <begin position="583"/>
        <end position="910"/>
    </location>
</feature>
<feature type="region of interest" description="Interaction with KAT7" evidence="2">
    <location>
        <begin position="616"/>
        <end position="910"/>
    </location>
</feature>
<feature type="compositionally biased region" description="Low complexity" evidence="7">
    <location>
        <begin position="44"/>
        <end position="88"/>
    </location>
</feature>
<feature type="compositionally biased region" description="Low complexity" evidence="7">
    <location>
        <begin position="192"/>
        <end position="214"/>
    </location>
</feature>
<feature type="compositionally biased region" description="Polar residues" evidence="7">
    <location>
        <begin position="215"/>
        <end position="225"/>
    </location>
</feature>
<feature type="binding site" evidence="8 10 11 12 13 14 15 16 17">
    <location>
        <position position="697"/>
    </location>
    <ligand>
        <name>17beta-hydroxy-5alpha-androstan-3-one</name>
        <dbReference type="ChEBI" id="CHEBI:16330"/>
    </ligand>
</feature>
<feature type="binding site" evidence="8 10 11 12 13 14 15 16 17">
    <location>
        <position position="744"/>
    </location>
    <ligand>
        <name>17beta-hydroxy-5alpha-androstan-3-one</name>
        <dbReference type="ChEBI" id="CHEBI:16330"/>
    </ligand>
</feature>
<feature type="binding site" evidence="8 10 11 12 13 14 15 16 17">
    <location>
        <position position="869"/>
    </location>
    <ligand>
        <name>17beta-hydroxy-5alpha-androstan-3-one</name>
        <dbReference type="ChEBI" id="CHEBI:16330"/>
    </ligand>
</feature>
<feature type="site" description="Interaction with coactivator LXXL and FXXFY motifs" evidence="8">
    <location>
        <position position="712"/>
    </location>
</feature>
<feature type="site" description="Interaction with coactivator FXXLF and FXXFY motifs" evidence="8">
    <location>
        <position position="889"/>
    </location>
</feature>
<feature type="modified residue" description="Phosphoserine; by CDK9" evidence="2">
    <location>
        <position position="81"/>
    </location>
</feature>
<feature type="modified residue" description="Phosphoserine" evidence="2">
    <location>
        <position position="93"/>
    </location>
</feature>
<feature type="modified residue" description="Phosphotyrosine; by CSK" evidence="2">
    <location>
        <position position="222"/>
    </location>
</feature>
<feature type="modified residue" description="Phosphoserine" evidence="2">
    <location>
        <position position="255"/>
    </location>
</feature>
<feature type="modified residue" description="Phosphotyrosine; by CSK and TNK2" evidence="2">
    <location>
        <position position="266"/>
    </location>
</feature>
<feature type="modified residue" description="Phosphotyrosine; by CSK" evidence="2">
    <location>
        <position position="306"/>
    </location>
</feature>
<feature type="modified residue" description="Phosphotyrosine; by CSK" evidence="2">
    <location>
        <position position="345"/>
    </location>
</feature>
<feature type="modified residue" description="Phosphotyrosine; by CSK" evidence="2">
    <location>
        <position position="356"/>
    </location>
</feature>
<feature type="modified residue" description="Phosphotyrosine; by CSK" evidence="2">
    <location>
        <position position="361"/>
    </location>
</feature>
<feature type="modified residue" description="Phosphotyrosine; by CSK and TNK2" evidence="2">
    <location>
        <position position="362"/>
    </location>
</feature>
<feature type="modified residue" description="Phosphotyrosine; by CSK" evidence="2">
    <location>
        <position position="392"/>
    </location>
</feature>
<feature type="modified residue" description="Phosphotyrosine; by CSK" evidence="2">
    <location>
        <position position="526"/>
    </location>
</feature>
<feature type="modified residue" description="Phosphotyrosine; by CSK" evidence="2">
    <location>
        <position position="543"/>
    </location>
</feature>
<feature type="modified residue" description="Phosphoserine; by STK4/MST1" evidence="2">
    <location>
        <position position="642"/>
    </location>
</feature>
<feature type="modified residue" description="Phosphotyrosine; by CSK" evidence="2">
    <location>
        <position position="907"/>
    </location>
</feature>
<feature type="cross-link" description="Glycyl lysine isopeptide (Lys-Gly) (interchain with G-Cter in SUMO)" evidence="1">
    <location>
        <position position="385"/>
    </location>
</feature>
<feature type="cross-link" description="Glycyl lysine isopeptide (Lys-Gly) (interchain with G-Cter in SUMO)" evidence="1">
    <location>
        <position position="512"/>
    </location>
</feature>
<feature type="cross-link" description="Glycyl lysine isopeptide (Lys-Gly) (interchain with G-Cter in ubiquitin)" evidence="2">
    <location>
        <position position="837"/>
    </location>
</feature>
<feature type="cross-link" description="Glycyl lysine isopeptide (Lys-Gly) (interchain with G-Cter in ubiquitin)" evidence="2">
    <location>
        <position position="839"/>
    </location>
</feature>
<feature type="helix" evidence="18">
    <location>
        <begin position="664"/>
        <end position="672"/>
    </location>
</feature>
<feature type="helix" evidence="18">
    <location>
        <begin position="689"/>
        <end position="712"/>
    </location>
</feature>
<feature type="helix" evidence="18">
    <location>
        <begin position="717"/>
        <end position="719"/>
    </location>
</feature>
<feature type="helix" evidence="18">
    <location>
        <begin position="722"/>
        <end position="749"/>
    </location>
</feature>
<feature type="strand" evidence="18">
    <location>
        <begin position="752"/>
        <end position="757"/>
    </location>
</feature>
<feature type="strand" evidence="18">
    <location>
        <begin position="760"/>
        <end position="762"/>
    </location>
</feature>
<feature type="helix" evidence="18">
    <location>
        <begin position="764"/>
        <end position="769"/>
    </location>
</feature>
<feature type="helix" evidence="18">
    <location>
        <begin position="773"/>
        <end position="788"/>
    </location>
</feature>
<feature type="helix" evidence="18">
    <location>
        <begin position="793"/>
        <end position="804"/>
    </location>
</feature>
<feature type="strand" evidence="18">
    <location>
        <begin position="806"/>
        <end position="809"/>
    </location>
</feature>
<feature type="helix" evidence="18">
    <location>
        <begin position="816"/>
        <end position="835"/>
    </location>
</feature>
<feature type="helix" evidence="18">
    <location>
        <begin position="841"/>
        <end position="874"/>
    </location>
</feature>
<feature type="helix" evidence="18">
    <location>
        <begin position="876"/>
        <end position="879"/>
    </location>
</feature>
<feature type="helix" evidence="18">
    <location>
        <begin position="885"/>
        <end position="893"/>
    </location>
</feature>
<feature type="helix" evidence="18">
    <location>
        <begin position="895"/>
        <end position="899"/>
    </location>
</feature>
<feature type="strand" evidence="18">
    <location>
        <begin position="902"/>
        <end position="905"/>
    </location>
</feature>
<name>ANDR_PANTR</name>
<sequence>MEVQLGLGRVYPRPPSKTYRGAFQNLFQSVREVIQNPGPRHPEAASAAPPGASLLLQQQQQQQQQQQQQQQQQQQQQQETSPRQQQQQGEDGSPQAHRRGPTGYLVLDEEQQPSQPQSAPECHPERGCVPEPGAAVAASKGLPQQLPAPPDEDDSAAPSTLSLLGPTFPGLSSCSADLKDILSEASTMQLLQQQQQEAVSEGSSSGRAREASGAPTSSKDNYLGGTSTISDSAKELCKAVSVSMGLGVEALEHLSPGEQLRGDCMYAPLLGVPPAVRPTPCAPLAECKGSLLDDSAGKSTEDTAEYSPFKGGYTKGLEGESLGCSGSAAAGSSGTLELPSTLSLYKSGALDEAAAYQSRDYYNFPLALAGPPPPPPPPHPHARIKLENPLDYGSAWAAAAAQCRYGDLASLHGAGAAGPGSGSPSAAASSSWHTLFTAEEGQLYGPCGGGGGGGGGGGGGGGGGEAGAVAPYGYTRPPQGLAGQEGDFTAPDVWYPGGMVSRVPYPSPTCVKSEMGPWMDSYSGPYGDMRLETARDHVLPIDYYFPPQKTCLICGDEASGCHYGALTCGSCKVFFKRAAEGKQKYLCASRNDCTIDKFRRKNCPSCRLRKCYEAGMTLGARKLKKLGNLKLQEEGEASSTTSPTEETTQKLTVSHIEGYECQPIFLNVLEAIEPGVVCAGHDNNQPDSFAALLSSLNELGERQLVHVVKWAKALPGFRNLHVDDQMAVIQYSWMGLMVFAMGWRSFTNVNSRMLYFAPDLVFNEYRMHKSRMYSQCVRMRHLSQEFGWLQITPQEFLCMKALLLFSIIPVDGLKNQKFFDELRMNYIKELDRIIACKRKNPTSCSRRFYQLTKLLDSVQPIARELHQFTFDLLIKSHMVSVDFPEMMAEIISVQVPKILSGKVKPIYFHTQ</sequence>